<name>MARH3_RAT</name>
<organism>
    <name type="scientific">Rattus norvegicus</name>
    <name type="common">Rat</name>
    <dbReference type="NCBI Taxonomy" id="10116"/>
    <lineage>
        <taxon>Eukaryota</taxon>
        <taxon>Metazoa</taxon>
        <taxon>Chordata</taxon>
        <taxon>Craniata</taxon>
        <taxon>Vertebrata</taxon>
        <taxon>Euteleostomi</taxon>
        <taxon>Mammalia</taxon>
        <taxon>Eutheria</taxon>
        <taxon>Euarchontoglires</taxon>
        <taxon>Glires</taxon>
        <taxon>Rodentia</taxon>
        <taxon>Myomorpha</taxon>
        <taxon>Muroidea</taxon>
        <taxon>Muridae</taxon>
        <taxon>Murinae</taxon>
        <taxon>Rattus</taxon>
    </lineage>
</organism>
<protein>
    <recommendedName>
        <fullName>E3 ubiquitin-protein ligase MARCHF3</fullName>
        <ecNumber>2.3.2.27</ecNumber>
    </recommendedName>
    <alternativeName>
        <fullName>Membrane-associated RING finger protein 3</fullName>
    </alternativeName>
    <alternativeName>
        <fullName>Membrane-associated RING-CH protein III</fullName>
        <shortName>MARCH-III</shortName>
    </alternativeName>
    <alternativeName>
        <fullName evidence="6">RING-type E3 ubiquitin transferase MARCHF3</fullName>
    </alternativeName>
</protein>
<comment type="function">
    <text evidence="5">E3 ubiquitin-protein ligase which may be involved in endosomal trafficking. E3 ubiquitin ligases accept ubiquitin from an E2 ubiquitin-conjugating enzyme in the form of a thioester and then directly transfer the ubiquitin to targeted substrates.</text>
</comment>
<comment type="catalytic activity">
    <reaction>
        <text>S-ubiquitinyl-[E2 ubiquitin-conjugating enzyme]-L-cysteine + [acceptor protein]-L-lysine = [E2 ubiquitin-conjugating enzyme]-L-cysteine + N(6)-ubiquitinyl-[acceptor protein]-L-lysine.</text>
        <dbReference type="EC" id="2.3.2.27"/>
    </reaction>
</comment>
<comment type="pathway">
    <text>Protein modification; protein ubiquitination.</text>
</comment>
<comment type="subunit">
    <text evidence="5">Interacts with MARCHF2 and STX6.</text>
</comment>
<comment type="subcellular location">
    <subcellularLocation>
        <location>Cytoplasmic vesicle membrane</location>
        <topology>Multi-pass membrane protein</topology>
    </subcellularLocation>
    <subcellularLocation>
        <location evidence="1">Early endosome membrane</location>
        <topology evidence="1">Multi-pass membrane protein</topology>
    </subcellularLocation>
</comment>
<comment type="tissue specificity">
    <text evidence="5">Expressed predominantly in lung, colon and spleen. Present in liver (at protein level).</text>
</comment>
<comment type="domain">
    <text>The RING-CH-type zinc finger domain is required for E3 ligase activity.</text>
</comment>
<gene>
    <name type="primary">Marchf3</name>
    <name type="synonym">March3</name>
</gene>
<sequence>MTTSRCSHLPEVLPDCTSSAAPVVKTVEDCGSLVNGQPQYVMQVSAKDGQLLSTVVRTLATQSPFNDRPMCRICHEGSSQEDLLSPCECTGTLGTIHRSCLEHWLSSSNTSYCELCHFRFAVERKPRPLVEWLRNPGPQHEKRTLFGDMVCFLFITPLATISGWLCLRGAVDHLHFSSRLEAVGLIALTVALFTIYLFWTLVSFRYHCRLYNEWRRTNQRVILLIPKSVNIPSNQQSLLGLHSVKRNSKETIV</sequence>
<reference key="1">
    <citation type="journal article" date="2006" name="J. Biochem.">
        <title>MARCH-III is a novel component of endosomes with properties similar to those of MARCH-II.</title>
        <authorList>
            <person name="Fukuda H."/>
            <person name="Nakamura N."/>
            <person name="Hirose S."/>
        </authorList>
    </citation>
    <scope>NUCLEOTIDE SEQUENCE [MRNA]</scope>
    <scope>FUNCTION</scope>
    <scope>TISSUE SPECIFICITY</scope>
    <scope>INTERACTION WITH MARCHF2 AND STX6</scope>
    <source>
        <tissue>Kidney</tissue>
    </source>
</reference>
<reference key="2">
    <citation type="journal article" date="2004" name="Genome Res.">
        <title>The status, quality, and expansion of the NIH full-length cDNA project: the Mammalian Gene Collection (MGC).</title>
        <authorList>
            <consortium name="The MGC Project Team"/>
        </authorList>
    </citation>
    <scope>NUCLEOTIDE SEQUENCE [LARGE SCALE MRNA]</scope>
    <source>
        <tissue>Heart</tissue>
    </source>
</reference>
<evidence type="ECO:0000250" key="1"/>
<evidence type="ECO:0000250" key="2">
    <source>
        <dbReference type="UniProtKB" id="Q86UD3"/>
    </source>
</evidence>
<evidence type="ECO:0000255" key="3"/>
<evidence type="ECO:0000255" key="4">
    <source>
        <dbReference type="PROSITE-ProRule" id="PRU00623"/>
    </source>
</evidence>
<evidence type="ECO:0000269" key="5">
    <source>
    </source>
</evidence>
<evidence type="ECO:0000305" key="6"/>
<proteinExistence type="evidence at protein level"/>
<feature type="chain" id="PRO_0000055929" description="E3 ubiquitin-protein ligase MARCHF3">
    <location>
        <begin position="1"/>
        <end position="253"/>
    </location>
</feature>
<feature type="transmembrane region" description="Helical" evidence="3">
    <location>
        <begin position="145"/>
        <end position="165"/>
    </location>
</feature>
<feature type="transmembrane region" description="Helical" evidence="3">
    <location>
        <begin position="182"/>
        <end position="202"/>
    </location>
</feature>
<feature type="zinc finger region" description="RING-CH-type" evidence="4">
    <location>
        <begin position="63"/>
        <end position="123"/>
    </location>
</feature>
<feature type="binding site" evidence="4">
    <location>
        <position position="71"/>
    </location>
    <ligand>
        <name>Zn(2+)</name>
        <dbReference type="ChEBI" id="CHEBI:29105"/>
        <label>1</label>
    </ligand>
</feature>
<feature type="binding site" evidence="4">
    <location>
        <position position="74"/>
    </location>
    <ligand>
        <name>Zn(2+)</name>
        <dbReference type="ChEBI" id="CHEBI:29105"/>
        <label>1</label>
    </ligand>
</feature>
<feature type="binding site" evidence="4">
    <location>
        <position position="87"/>
    </location>
    <ligand>
        <name>Zn(2+)</name>
        <dbReference type="ChEBI" id="CHEBI:29105"/>
        <label>2</label>
    </ligand>
</feature>
<feature type="binding site" evidence="4">
    <location>
        <position position="89"/>
    </location>
    <ligand>
        <name>Zn(2+)</name>
        <dbReference type="ChEBI" id="CHEBI:29105"/>
        <label>2</label>
    </ligand>
</feature>
<feature type="binding site" evidence="4">
    <location>
        <position position="97"/>
    </location>
    <ligand>
        <name>Zn(2+)</name>
        <dbReference type="ChEBI" id="CHEBI:29105"/>
        <label>1</label>
    </ligand>
</feature>
<feature type="binding site" evidence="4">
    <location>
        <position position="100"/>
    </location>
    <ligand>
        <name>Zn(2+)</name>
        <dbReference type="ChEBI" id="CHEBI:29105"/>
        <label>1</label>
    </ligand>
</feature>
<feature type="binding site" evidence="4">
    <location>
        <position position="113"/>
    </location>
    <ligand>
        <name>Zn(2+)</name>
        <dbReference type="ChEBI" id="CHEBI:29105"/>
        <label>2</label>
    </ligand>
</feature>
<feature type="binding site" evidence="4">
    <location>
        <position position="116"/>
    </location>
    <ligand>
        <name>Zn(2+)</name>
        <dbReference type="ChEBI" id="CHEBI:29105"/>
        <label>2</label>
    </ligand>
</feature>
<feature type="modified residue" description="Phosphoserine" evidence="2">
    <location>
        <position position="237"/>
    </location>
</feature>
<feature type="modified residue" description="Phosphoserine" evidence="2">
    <location>
        <position position="243"/>
    </location>
</feature>
<accession>Q5XIE5</accession>
<accession>Q33E96</accession>
<dbReference type="EC" id="2.3.2.27"/>
<dbReference type="EMBL" id="AB048840">
    <property type="protein sequence ID" value="BAE47142.1"/>
    <property type="molecule type" value="mRNA"/>
</dbReference>
<dbReference type="EMBL" id="BC083738">
    <property type="protein sequence ID" value="AAH83738.1"/>
    <property type="molecule type" value="mRNA"/>
</dbReference>
<dbReference type="RefSeq" id="NP_001007760.1">
    <property type="nucleotide sequence ID" value="NM_001007759.1"/>
</dbReference>
<dbReference type="RefSeq" id="XP_006254811.1">
    <property type="nucleotide sequence ID" value="XM_006254749.5"/>
</dbReference>
<dbReference type="RefSeq" id="XP_008770381.1">
    <property type="nucleotide sequence ID" value="XM_008772159.2"/>
</dbReference>
<dbReference type="RefSeq" id="XP_017456494.1">
    <property type="nucleotide sequence ID" value="XM_017601005.1"/>
</dbReference>
<dbReference type="RefSeq" id="XP_017456495.1">
    <property type="nucleotide sequence ID" value="XM_017601006.1"/>
</dbReference>
<dbReference type="RefSeq" id="XP_063133562.1">
    <property type="nucleotide sequence ID" value="XM_063277492.1"/>
</dbReference>
<dbReference type="SMR" id="Q5XIE5"/>
<dbReference type="BioGRID" id="265017">
    <property type="interactions" value="2"/>
</dbReference>
<dbReference type="FunCoup" id="Q5XIE5">
    <property type="interactions" value="142"/>
</dbReference>
<dbReference type="STRING" id="10116.ENSRNOP00000030051"/>
<dbReference type="iPTMnet" id="Q5XIE5"/>
<dbReference type="PhosphoSitePlus" id="Q5XIE5"/>
<dbReference type="PaxDb" id="10116-ENSRNOP00000030051"/>
<dbReference type="Ensembl" id="ENSRNOT00000081020.2">
    <property type="protein sequence ID" value="ENSRNOP00000071176.1"/>
    <property type="gene ID" value="ENSRNOG00000023013.7"/>
</dbReference>
<dbReference type="GeneID" id="364878"/>
<dbReference type="KEGG" id="rno:364878"/>
<dbReference type="UCSC" id="RGD:1359308">
    <property type="organism name" value="rat"/>
</dbReference>
<dbReference type="AGR" id="RGD:1359308"/>
<dbReference type="CTD" id="115123"/>
<dbReference type="RGD" id="1359308">
    <property type="gene designation" value="Marchf3"/>
</dbReference>
<dbReference type="eggNOG" id="KOG1609">
    <property type="taxonomic scope" value="Eukaryota"/>
</dbReference>
<dbReference type="GeneTree" id="ENSGT00940000159206"/>
<dbReference type="InParanoid" id="Q5XIE5"/>
<dbReference type="OMA" id="FNDQPIC"/>
<dbReference type="OrthoDB" id="273089at2759"/>
<dbReference type="PhylomeDB" id="Q5XIE5"/>
<dbReference type="TreeFam" id="TF319557"/>
<dbReference type="UniPathway" id="UPA00143"/>
<dbReference type="PRO" id="PR:Q5XIE5"/>
<dbReference type="Proteomes" id="UP000002494">
    <property type="component" value="Chromosome 18"/>
</dbReference>
<dbReference type="Bgee" id="ENSRNOG00000023013">
    <property type="expression patterns" value="Expressed in esophagus and 19 other cell types or tissues"/>
</dbReference>
<dbReference type="GO" id="GO:0031901">
    <property type="term" value="C:early endosome membrane"/>
    <property type="evidence" value="ECO:0007669"/>
    <property type="project" value="UniProtKB-SubCell"/>
</dbReference>
<dbReference type="GO" id="GO:0005768">
    <property type="term" value="C:endosome"/>
    <property type="evidence" value="ECO:0000250"/>
    <property type="project" value="UniProtKB"/>
</dbReference>
<dbReference type="GO" id="GO:0005764">
    <property type="term" value="C:lysosome"/>
    <property type="evidence" value="ECO:0000250"/>
    <property type="project" value="UniProtKB"/>
</dbReference>
<dbReference type="GO" id="GO:0004842">
    <property type="term" value="F:ubiquitin-protein transferase activity"/>
    <property type="evidence" value="ECO:0000318"/>
    <property type="project" value="GO_Central"/>
</dbReference>
<dbReference type="GO" id="GO:0008270">
    <property type="term" value="F:zinc ion binding"/>
    <property type="evidence" value="ECO:0007669"/>
    <property type="project" value="UniProtKB-KW"/>
</dbReference>
<dbReference type="GO" id="GO:0006897">
    <property type="term" value="P:endocytosis"/>
    <property type="evidence" value="ECO:0007669"/>
    <property type="project" value="UniProtKB-KW"/>
</dbReference>
<dbReference type="GO" id="GO:0016567">
    <property type="term" value="P:protein ubiquitination"/>
    <property type="evidence" value="ECO:0000318"/>
    <property type="project" value="GO_Central"/>
</dbReference>
<dbReference type="CDD" id="cd16809">
    <property type="entry name" value="RING_CH-C4HC3_MARCH3"/>
    <property type="match status" value="1"/>
</dbReference>
<dbReference type="FunFam" id="3.30.40.10:FF:000119">
    <property type="entry name" value="E3 ubiquitin-protein ligase MARCH2"/>
    <property type="match status" value="1"/>
</dbReference>
<dbReference type="Gene3D" id="3.30.40.10">
    <property type="entry name" value="Zinc/RING finger domain, C3HC4 (zinc finger)"/>
    <property type="match status" value="1"/>
</dbReference>
<dbReference type="InterPro" id="IPR001841">
    <property type="entry name" value="Znf_RING"/>
</dbReference>
<dbReference type="InterPro" id="IPR011016">
    <property type="entry name" value="Znf_RING-CH"/>
</dbReference>
<dbReference type="InterPro" id="IPR013083">
    <property type="entry name" value="Znf_RING/FYVE/PHD"/>
</dbReference>
<dbReference type="PANTHER" id="PTHR46065">
    <property type="entry name" value="E3 UBIQUITIN-PROTEIN LIGASE MARCH 2/3 FAMILY MEMBER"/>
    <property type="match status" value="1"/>
</dbReference>
<dbReference type="PANTHER" id="PTHR46065:SF2">
    <property type="entry name" value="E3 UBIQUITIN-PROTEIN LIGASE MARCHF3"/>
    <property type="match status" value="1"/>
</dbReference>
<dbReference type="Pfam" id="PF12906">
    <property type="entry name" value="RINGv"/>
    <property type="match status" value="1"/>
</dbReference>
<dbReference type="SMART" id="SM00744">
    <property type="entry name" value="RINGv"/>
    <property type="match status" value="1"/>
</dbReference>
<dbReference type="SUPFAM" id="SSF57850">
    <property type="entry name" value="RING/U-box"/>
    <property type="match status" value="1"/>
</dbReference>
<dbReference type="PROSITE" id="PS51292">
    <property type="entry name" value="ZF_RING_CH"/>
    <property type="match status" value="1"/>
</dbReference>
<keyword id="KW-0968">Cytoplasmic vesicle</keyword>
<keyword id="KW-0254">Endocytosis</keyword>
<keyword id="KW-0967">Endosome</keyword>
<keyword id="KW-0472">Membrane</keyword>
<keyword id="KW-0479">Metal-binding</keyword>
<keyword id="KW-0597">Phosphoprotein</keyword>
<keyword id="KW-1185">Reference proteome</keyword>
<keyword id="KW-0808">Transferase</keyword>
<keyword id="KW-0812">Transmembrane</keyword>
<keyword id="KW-1133">Transmembrane helix</keyword>
<keyword id="KW-0833">Ubl conjugation pathway</keyword>
<keyword id="KW-0862">Zinc</keyword>
<keyword id="KW-0863">Zinc-finger</keyword>